<evidence type="ECO:0000250" key="1">
    <source>
        <dbReference type="UniProtKB" id="P23527"/>
    </source>
</evidence>
<evidence type="ECO:0000250" key="2">
    <source>
        <dbReference type="UniProtKB" id="P33778"/>
    </source>
</evidence>
<evidence type="ECO:0000250" key="3">
    <source>
        <dbReference type="UniProtKB" id="P58876"/>
    </source>
</evidence>
<evidence type="ECO:0000250" key="4">
    <source>
        <dbReference type="UniProtKB" id="P62807"/>
    </source>
</evidence>
<evidence type="ECO:0000250" key="5">
    <source>
        <dbReference type="UniProtKB" id="Q00729"/>
    </source>
</evidence>
<evidence type="ECO:0000250" key="6">
    <source>
        <dbReference type="UniProtKB" id="Q5QNW6"/>
    </source>
</evidence>
<evidence type="ECO:0000250" key="7">
    <source>
        <dbReference type="UniProtKB" id="Q64475"/>
    </source>
</evidence>
<evidence type="ECO:0000250" key="8">
    <source>
        <dbReference type="UniProtKB" id="Q6ZWY9"/>
    </source>
</evidence>
<evidence type="ECO:0000250" key="9">
    <source>
        <dbReference type="UniProtKB" id="Q96A08"/>
    </source>
</evidence>
<evidence type="ECO:0000256" key="10">
    <source>
        <dbReference type="SAM" id="MobiDB-lite"/>
    </source>
</evidence>
<evidence type="ECO:0000269" key="11">
    <source>
    </source>
</evidence>
<evidence type="ECO:0000269" key="12">
    <source>
    </source>
</evidence>
<evidence type="ECO:0000269" key="13">
    <source>
    </source>
</evidence>
<evidence type="ECO:0000269" key="14">
    <source>
    </source>
</evidence>
<evidence type="ECO:0000269" key="15">
    <source>
    </source>
</evidence>
<evidence type="ECO:0000269" key="16">
    <source>
    </source>
</evidence>
<evidence type="ECO:0000269" key="17">
    <source>
    </source>
</evidence>
<evidence type="ECO:0000269" key="18">
    <source>
    </source>
</evidence>
<evidence type="ECO:0000269" key="19">
    <source>
    </source>
</evidence>
<evidence type="ECO:0000269" key="20">
    <source>
    </source>
</evidence>
<evidence type="ECO:0000269" key="21">
    <source>
    </source>
</evidence>
<evidence type="ECO:0000269" key="22">
    <source>
    </source>
</evidence>
<evidence type="ECO:0000269" key="23">
    <source>
    </source>
</evidence>
<evidence type="ECO:0000269" key="24">
    <source>
    </source>
</evidence>
<evidence type="ECO:0000269" key="25">
    <source>
    </source>
</evidence>
<evidence type="ECO:0000269" key="26">
    <source>
    </source>
</evidence>
<evidence type="ECO:0000269" key="27">
    <source>
    </source>
</evidence>
<evidence type="ECO:0000269" key="28">
    <source>
    </source>
</evidence>
<evidence type="ECO:0000269" key="29">
    <source>
    </source>
</evidence>
<evidence type="ECO:0000305" key="30"/>
<evidence type="ECO:0000312" key="31">
    <source>
        <dbReference type="HGNC" id="HGNC:4762"/>
    </source>
</evidence>
<dbReference type="EMBL" id="AB041017">
    <property type="protein sequence ID" value="BAD74065.1"/>
    <property type="molecule type" value="Genomic_DNA"/>
</dbReference>
<dbReference type="EMBL" id="AP001751">
    <property type="protein sequence ID" value="BAA95538.1"/>
    <property type="molecule type" value="Genomic_DNA"/>
</dbReference>
<dbReference type="PIR" id="S65409">
    <property type="entry name" value="S65409"/>
</dbReference>
<dbReference type="RefSeq" id="NP_059141.1">
    <property type="nucleotide sequence ID" value="NM_017445.3"/>
</dbReference>
<dbReference type="SMR" id="P57053"/>
<dbReference type="BioGRID" id="3195446">
    <property type="interactions" value="147"/>
</dbReference>
<dbReference type="FunCoup" id="P57053">
    <property type="interactions" value="861"/>
</dbReference>
<dbReference type="IntAct" id="P57053">
    <property type="interactions" value="76"/>
</dbReference>
<dbReference type="STRING" id="9606.ENSP00000481622"/>
<dbReference type="GlyCosmos" id="P57053">
    <property type="glycosylation" value="1 site, No reported glycans"/>
</dbReference>
<dbReference type="GlyGen" id="P57053">
    <property type="glycosylation" value="2 sites, 1 O-linked glycan (1 site)"/>
</dbReference>
<dbReference type="iPTMnet" id="P57053"/>
<dbReference type="MetOSite" id="P57053"/>
<dbReference type="PhosphoSitePlus" id="P57053"/>
<dbReference type="SwissPalm" id="P57053"/>
<dbReference type="BioMuta" id="H2BFS"/>
<dbReference type="DMDM" id="9973351"/>
<dbReference type="jPOST" id="P57053"/>
<dbReference type="MassIVE" id="P57053"/>
<dbReference type="PaxDb" id="9606-ENSP00000481622"/>
<dbReference type="PeptideAtlas" id="P57053"/>
<dbReference type="ProteomicsDB" id="56969"/>
<dbReference type="Pumba" id="P57053"/>
<dbReference type="TopDownProteomics" id="P57053"/>
<dbReference type="Antibodypedia" id="74258">
    <property type="antibodies" value="120 antibodies from 14 providers"/>
</dbReference>
<dbReference type="Ensembl" id="ENST00000599962.2">
    <property type="protein sequence ID" value="ENSP00000481622.1"/>
    <property type="gene ID" value="ENSG00000234289.6"/>
</dbReference>
<dbReference type="GeneID" id="54145"/>
<dbReference type="KEGG" id="hsa:102724334"/>
<dbReference type="MANE-Select" id="ENST00000599962.2">
    <property type="protein sequence ID" value="ENSP00000481622.1"/>
    <property type="RefSeq nucleotide sequence ID" value="NM_017445.3"/>
    <property type="RefSeq protein sequence ID" value="NP_059141.1"/>
</dbReference>
<dbReference type="UCSC" id="uc002zdj.2">
    <property type="organism name" value="human"/>
</dbReference>
<dbReference type="AGR" id="HGNC:4762"/>
<dbReference type="DisGeNET" id="102724334"/>
<dbReference type="GeneCards" id="H2BC12L"/>
<dbReference type="HGNC" id="HGNC:4762">
    <property type="gene designation" value="H2BC12L"/>
</dbReference>
<dbReference type="HPA" id="ENSG00000234289">
    <property type="expression patterns" value="Low tissue specificity"/>
</dbReference>
<dbReference type="neXtProt" id="NX_P57053"/>
<dbReference type="OpenTargets" id="ENSG00000234289"/>
<dbReference type="VEuPathDB" id="HostDB:ENSG00000234289"/>
<dbReference type="eggNOG" id="KOG1744">
    <property type="taxonomic scope" value="Eukaryota"/>
</dbReference>
<dbReference type="GeneTree" id="ENSGT01110000267152"/>
<dbReference type="HOGENOM" id="CLU_075666_2_1_1"/>
<dbReference type="InParanoid" id="P57053"/>
<dbReference type="PAN-GO" id="P57053">
    <property type="GO annotations" value="2 GO annotations based on evolutionary models"/>
</dbReference>
<dbReference type="PathwayCommons" id="P57053"/>
<dbReference type="Reactome" id="R-HSA-110328">
    <property type="pathway name" value="Recognition and association of DNA glycosylase with site containing an affected pyrimidine"/>
</dbReference>
<dbReference type="Reactome" id="R-HSA-110329">
    <property type="pathway name" value="Cleavage of the damaged pyrimidine"/>
</dbReference>
<dbReference type="Reactome" id="R-HSA-110330">
    <property type="pathway name" value="Recognition and association of DNA glycosylase with site containing an affected purine"/>
</dbReference>
<dbReference type="Reactome" id="R-HSA-110331">
    <property type="pathway name" value="Cleavage of the damaged purine"/>
</dbReference>
<dbReference type="Reactome" id="R-HSA-1221632">
    <property type="pathway name" value="Meiotic synapsis"/>
</dbReference>
<dbReference type="Reactome" id="R-HSA-171306">
    <property type="pathway name" value="Packaging Of Telomere Ends"/>
</dbReference>
<dbReference type="Reactome" id="R-HSA-1912408">
    <property type="pathway name" value="Pre-NOTCH Transcription and Translation"/>
</dbReference>
<dbReference type="Reactome" id="R-HSA-201722">
    <property type="pathway name" value="Formation of the beta-catenin:TCF transactivating complex"/>
</dbReference>
<dbReference type="Reactome" id="R-HSA-212300">
    <property type="pathway name" value="PRC2 methylates histones and DNA"/>
</dbReference>
<dbReference type="Reactome" id="R-HSA-2299718">
    <property type="pathway name" value="Condensation of Prophase Chromosomes"/>
</dbReference>
<dbReference type="Reactome" id="R-HSA-2559580">
    <property type="pathway name" value="Oxidative Stress Induced Senescence"/>
</dbReference>
<dbReference type="Reactome" id="R-HSA-2559582">
    <property type="pathway name" value="Senescence-Associated Secretory Phenotype (SASP)"/>
</dbReference>
<dbReference type="Reactome" id="R-HSA-2559586">
    <property type="pathway name" value="DNA Damage/Telomere Stress Induced Senescence"/>
</dbReference>
<dbReference type="Reactome" id="R-HSA-427359">
    <property type="pathway name" value="SIRT1 negatively regulates rRNA expression"/>
</dbReference>
<dbReference type="Reactome" id="R-HSA-427389">
    <property type="pathway name" value="ERCC6 (CSB) and EHMT2 (G9a) positively regulate rRNA expression"/>
</dbReference>
<dbReference type="Reactome" id="R-HSA-427413">
    <property type="pathway name" value="NoRC negatively regulates rRNA expression"/>
</dbReference>
<dbReference type="Reactome" id="R-HSA-5250924">
    <property type="pathway name" value="B-WICH complex positively regulates rRNA expression"/>
</dbReference>
<dbReference type="Reactome" id="R-HSA-5334118">
    <property type="pathway name" value="DNA methylation"/>
</dbReference>
<dbReference type="Reactome" id="R-HSA-5578749">
    <property type="pathway name" value="Transcriptional regulation by small RNAs"/>
</dbReference>
<dbReference type="Reactome" id="R-HSA-5617472">
    <property type="pathway name" value="Activation of anterior HOX genes in hindbrain development during early embryogenesis"/>
</dbReference>
<dbReference type="Reactome" id="R-HSA-5625886">
    <property type="pathway name" value="Activated PKN1 stimulates transcription of AR (androgen receptor) regulated genes KLK2 and KLK3"/>
</dbReference>
<dbReference type="Reactome" id="R-HSA-5693565">
    <property type="pathway name" value="Recruitment and ATM-mediated phosphorylation of repair and signaling proteins at DNA double strand breaks"/>
</dbReference>
<dbReference type="Reactome" id="R-HSA-5693571">
    <property type="pathway name" value="Nonhomologous End-Joining (NHEJ)"/>
</dbReference>
<dbReference type="Reactome" id="R-HSA-5693607">
    <property type="pathway name" value="Processing of DNA double-strand break ends"/>
</dbReference>
<dbReference type="Reactome" id="R-HSA-606279">
    <property type="pathway name" value="Deposition of new CENPA-containing nucleosomes at the centromere"/>
</dbReference>
<dbReference type="Reactome" id="R-HSA-68616">
    <property type="pathway name" value="Assembly of the ORC complex at the origin of replication"/>
</dbReference>
<dbReference type="Reactome" id="R-HSA-69473">
    <property type="pathway name" value="G2/M DNA damage checkpoint"/>
</dbReference>
<dbReference type="Reactome" id="R-HSA-73728">
    <property type="pathway name" value="RNA Polymerase I Promoter Opening"/>
</dbReference>
<dbReference type="Reactome" id="R-HSA-73772">
    <property type="pathway name" value="RNA Polymerase I Promoter Escape"/>
</dbReference>
<dbReference type="Reactome" id="R-HSA-8936459">
    <property type="pathway name" value="RUNX1 regulates genes involved in megakaryocyte differentiation and platelet function"/>
</dbReference>
<dbReference type="Reactome" id="R-HSA-8939236">
    <property type="pathway name" value="RUNX1 regulates transcription of genes involved in differentiation of HSCs"/>
</dbReference>
<dbReference type="Reactome" id="R-HSA-9018519">
    <property type="pathway name" value="Estrogen-dependent gene expression"/>
</dbReference>
<dbReference type="Reactome" id="R-HSA-912446">
    <property type="pathway name" value="Meiotic recombination"/>
</dbReference>
<dbReference type="Reactome" id="R-HSA-9616222">
    <property type="pathway name" value="Transcriptional regulation of granulopoiesis"/>
</dbReference>
<dbReference type="Reactome" id="R-HSA-9670095">
    <property type="pathway name" value="Inhibition of DNA recombination at telomere"/>
</dbReference>
<dbReference type="Reactome" id="R-HSA-9710421">
    <property type="pathway name" value="Defective pyroptosis"/>
</dbReference>
<dbReference type="Reactome" id="R-HSA-977225">
    <property type="pathway name" value="Amyloid fiber formation"/>
</dbReference>
<dbReference type="Reactome" id="R-HSA-9821002">
    <property type="pathway name" value="Chromatin modifications during the maternal to zygotic transition (MZT)"/>
</dbReference>
<dbReference type="Reactome" id="R-HSA-9821993">
    <property type="pathway name" value="Replacement of protamines by nucleosomes in the male pronucleus"/>
</dbReference>
<dbReference type="Reactome" id="R-HSA-9841922">
    <property type="pathway name" value="MLL4 and MLL3 complexes regulate expression of PPARG target genes in adipogenesis and hepatic steatosis"/>
</dbReference>
<dbReference type="Reactome" id="R-HSA-9843940">
    <property type="pathway name" value="Regulation of endogenous retroelements by KRAB-ZFP proteins"/>
</dbReference>
<dbReference type="Reactome" id="R-HSA-9843970">
    <property type="pathway name" value="Regulation of endogenous retroelements by the Human Silencing Hub (HUSH) complex"/>
</dbReference>
<dbReference type="Reactome" id="R-HSA-9845323">
    <property type="pathway name" value="Regulation of endogenous retroelements by Piwi-interacting RNAs (piRNAs)"/>
</dbReference>
<dbReference type="SignaLink" id="P57053"/>
<dbReference type="SIGNOR" id="P57053"/>
<dbReference type="BioGRID-ORCS" id="102724334">
    <property type="hits" value="0 hits in 6 CRISPR screens"/>
</dbReference>
<dbReference type="Pharos" id="P57053">
    <property type="development level" value="Tbio"/>
</dbReference>
<dbReference type="PRO" id="PR:P57053"/>
<dbReference type="Proteomes" id="UP000005640">
    <property type="component" value="Chromosome 21"/>
</dbReference>
<dbReference type="RNAct" id="P57053">
    <property type="molecule type" value="protein"/>
</dbReference>
<dbReference type="Bgee" id="ENSG00000234289">
    <property type="expression patterns" value="Expressed in male germ line stem cell (sensu Vertebrata) in testis and 19 other cell types or tissues"/>
</dbReference>
<dbReference type="GO" id="GO:0005829">
    <property type="term" value="C:cytosol"/>
    <property type="evidence" value="ECO:0000314"/>
    <property type="project" value="HPA"/>
</dbReference>
<dbReference type="GO" id="GO:0005615">
    <property type="term" value="C:extracellular space"/>
    <property type="evidence" value="ECO:0000314"/>
    <property type="project" value="UniProtKB"/>
</dbReference>
<dbReference type="GO" id="GO:0005654">
    <property type="term" value="C:nucleoplasm"/>
    <property type="evidence" value="ECO:0000314"/>
    <property type="project" value="HPA"/>
</dbReference>
<dbReference type="GO" id="GO:0000786">
    <property type="term" value="C:nucleosome"/>
    <property type="evidence" value="ECO:0007669"/>
    <property type="project" value="UniProtKB-KW"/>
</dbReference>
<dbReference type="GO" id="GO:0005634">
    <property type="term" value="C:nucleus"/>
    <property type="evidence" value="ECO:0000314"/>
    <property type="project" value="UniProtKB"/>
</dbReference>
<dbReference type="GO" id="GO:0003677">
    <property type="term" value="F:DNA binding"/>
    <property type="evidence" value="ECO:0007669"/>
    <property type="project" value="UniProtKB-KW"/>
</dbReference>
<dbReference type="GO" id="GO:0046982">
    <property type="term" value="F:protein heterodimerization activity"/>
    <property type="evidence" value="ECO:0007669"/>
    <property type="project" value="InterPro"/>
</dbReference>
<dbReference type="GO" id="GO:0030527">
    <property type="term" value="F:structural constituent of chromatin"/>
    <property type="evidence" value="ECO:0007669"/>
    <property type="project" value="InterPro"/>
</dbReference>
<dbReference type="GO" id="GO:0019731">
    <property type="term" value="P:antibacterial humoral response"/>
    <property type="evidence" value="ECO:0000314"/>
    <property type="project" value="UniProtKB"/>
</dbReference>
<dbReference type="GO" id="GO:0061844">
    <property type="term" value="P:antimicrobial humoral immune response mediated by antimicrobial peptide"/>
    <property type="evidence" value="ECO:0000314"/>
    <property type="project" value="UniProtKB"/>
</dbReference>
<dbReference type="GO" id="GO:0050830">
    <property type="term" value="P:defense response to Gram-positive bacterium"/>
    <property type="evidence" value="ECO:0000314"/>
    <property type="project" value="UniProtKB"/>
</dbReference>
<dbReference type="GO" id="GO:0002227">
    <property type="term" value="P:innate immune response in mucosa"/>
    <property type="evidence" value="ECO:0000314"/>
    <property type="project" value="UniProtKB"/>
</dbReference>
<dbReference type="GO" id="GO:0021762">
    <property type="term" value="P:substantia nigra development"/>
    <property type="evidence" value="ECO:0007007"/>
    <property type="project" value="UniProtKB"/>
</dbReference>
<dbReference type="CDD" id="cd22910">
    <property type="entry name" value="HFD_H2B"/>
    <property type="match status" value="1"/>
</dbReference>
<dbReference type="FunFam" id="1.10.20.10:FF:000003">
    <property type="entry name" value="Histone H2B"/>
    <property type="match status" value="1"/>
</dbReference>
<dbReference type="Gene3D" id="1.10.20.10">
    <property type="entry name" value="Histone, subunit A"/>
    <property type="match status" value="1"/>
</dbReference>
<dbReference type="InterPro" id="IPR009072">
    <property type="entry name" value="Histone-fold"/>
</dbReference>
<dbReference type="InterPro" id="IPR007125">
    <property type="entry name" value="Histone_H2A/H2B/H3"/>
</dbReference>
<dbReference type="InterPro" id="IPR000558">
    <property type="entry name" value="Histone_H2B"/>
</dbReference>
<dbReference type="InterPro" id="IPR055333">
    <property type="entry name" value="HISTONE_H2B_site"/>
</dbReference>
<dbReference type="PANTHER" id="PTHR23428">
    <property type="entry name" value="HISTONE H2B"/>
    <property type="match status" value="1"/>
</dbReference>
<dbReference type="Pfam" id="PF00125">
    <property type="entry name" value="Histone"/>
    <property type="match status" value="1"/>
</dbReference>
<dbReference type="PRINTS" id="PR00621">
    <property type="entry name" value="HISTONEH2B"/>
</dbReference>
<dbReference type="SMART" id="SM00427">
    <property type="entry name" value="H2B"/>
    <property type="match status" value="1"/>
</dbReference>
<dbReference type="SUPFAM" id="SSF47113">
    <property type="entry name" value="Histone-fold"/>
    <property type="match status" value="1"/>
</dbReference>
<dbReference type="PROSITE" id="PS00357">
    <property type="entry name" value="HISTONE_H2B"/>
    <property type="match status" value="1"/>
</dbReference>
<organism>
    <name type="scientific">Homo sapiens</name>
    <name type="common">Human</name>
    <dbReference type="NCBI Taxonomy" id="9606"/>
    <lineage>
        <taxon>Eukaryota</taxon>
        <taxon>Metazoa</taxon>
        <taxon>Chordata</taxon>
        <taxon>Craniata</taxon>
        <taxon>Vertebrata</taxon>
        <taxon>Euteleostomi</taxon>
        <taxon>Mammalia</taxon>
        <taxon>Eutheria</taxon>
        <taxon>Euarchontoglires</taxon>
        <taxon>Primates</taxon>
        <taxon>Haplorrhini</taxon>
        <taxon>Catarrhini</taxon>
        <taxon>Hominidae</taxon>
        <taxon>Homo</taxon>
    </lineage>
</organism>
<feature type="initiator methionine" description="Removed" evidence="1 11 13 14 29">
    <location>
        <position position="1"/>
    </location>
</feature>
<feature type="chain" id="PRO_0000071838" description="Histone H2B type F-S">
    <location>
        <begin position="2"/>
        <end position="126"/>
    </location>
</feature>
<feature type="region of interest" description="Disordered" evidence="10">
    <location>
        <begin position="1"/>
        <end position="36"/>
    </location>
</feature>
<feature type="compositionally biased region" description="Low complexity" evidence="10">
    <location>
        <begin position="1"/>
        <end position="12"/>
    </location>
</feature>
<feature type="modified residue" description="N-acetylproline" evidence="1">
    <location>
        <position position="2"/>
    </location>
</feature>
<feature type="modified residue" description="ADP-ribosyl glutamic acid" evidence="25">
    <location>
        <position position="3"/>
    </location>
</feature>
<feature type="modified residue" description="N6-(2-hydroxyisobutyryl)lysine; alternate" evidence="22">
    <location>
        <position position="6"/>
    </location>
</feature>
<feature type="modified residue" description="N6-(beta-hydroxybutyryl)lysine; alternate" evidence="24">
    <location>
        <position position="6"/>
    </location>
</feature>
<feature type="modified residue" description="N6-acetyllysine; alternate" evidence="15 17">
    <location>
        <position position="6"/>
    </location>
</feature>
<feature type="modified residue" description="N6-butyryllysine; alternate" evidence="23">
    <location>
        <position position="6"/>
    </location>
</feature>
<feature type="modified residue" description="N6-crotonyllysine; alternate" evidence="20">
    <location>
        <position position="6"/>
    </location>
</feature>
<feature type="modified residue" description="N6-lactoyllysine; alternate" evidence="27">
    <location>
        <position position="6"/>
    </location>
</feature>
<feature type="modified residue" description="ADP-ribosylserine" evidence="28">
    <location>
        <position position="7"/>
    </location>
</feature>
<feature type="modified residue" description="N6-(beta-hydroxybutyryl)lysine; alternate" evidence="24">
    <location>
        <position position="12"/>
    </location>
</feature>
<feature type="modified residue" description="N6-acetyllysine; alternate" evidence="17">
    <location>
        <position position="12"/>
    </location>
</feature>
<feature type="modified residue" description="N6-crotonyllysine; alternate" evidence="20">
    <location>
        <position position="12"/>
    </location>
</feature>
<feature type="modified residue" description="N6-lactoyllysine; alternate" evidence="27">
    <location>
        <position position="12"/>
    </location>
</feature>
<feature type="modified residue" description="N6-(2-hydroxyisobutyryl)lysine; alternate" evidence="22">
    <location>
        <position position="13"/>
    </location>
</feature>
<feature type="modified residue" description="N6-acetyllysine; alternate" evidence="15 17">
    <location>
        <position position="13"/>
    </location>
</feature>
<feature type="modified residue" description="N6-crotonyllysine; alternate" evidence="20">
    <location>
        <position position="13"/>
    </location>
</feature>
<feature type="modified residue" description="Phosphoserine; by STK4/MST1" evidence="12">
    <location>
        <position position="15"/>
    </location>
</feature>
<feature type="modified residue" description="N6-acetyllysine; alternate" evidence="15 17">
    <location>
        <position position="16"/>
    </location>
</feature>
<feature type="modified residue" description="N6-crotonyllysine; alternate" evidence="20">
    <location>
        <position position="16"/>
    </location>
</feature>
<feature type="modified residue" description="N6-lactoyllysine; alternate" evidence="27">
    <location>
        <position position="16"/>
    </location>
</feature>
<feature type="modified residue" description="N6-(beta-hydroxybutyryl)lysine; alternate" evidence="24">
    <location>
        <position position="17"/>
    </location>
</feature>
<feature type="modified residue" description="N6-acetyllysine; alternate" evidence="17">
    <location>
        <position position="17"/>
    </location>
</feature>
<feature type="modified residue" description="N6-crotonyllysine; alternate" evidence="20">
    <location>
        <position position="17"/>
    </location>
</feature>
<feature type="modified residue" description="N6-glutaryllysine; alternate" evidence="26">
    <location>
        <position position="17"/>
    </location>
</feature>
<feature type="modified residue" description="N6-lactoyllysine; alternate" evidence="27">
    <location>
        <position position="17"/>
    </location>
</feature>
<feature type="modified residue" description="N6-(2-hydroxyisobutyryl)lysine; alternate" evidence="22">
    <location>
        <position position="21"/>
    </location>
</feature>
<feature type="modified residue" description="N6-(beta-hydroxybutyryl)lysine; alternate" evidence="24">
    <location>
        <position position="21"/>
    </location>
</feature>
<feature type="modified residue" description="N6-acetyllysine; alternate" evidence="15 17">
    <location>
        <position position="21"/>
    </location>
</feature>
<feature type="modified residue" description="N6-butyryllysine; alternate" evidence="23">
    <location>
        <position position="21"/>
    </location>
</feature>
<feature type="modified residue" description="N6-crotonyllysine; alternate" evidence="20">
    <location>
        <position position="21"/>
    </location>
</feature>
<feature type="modified residue" description="N6-lactoyllysine; alternate" evidence="27">
    <location>
        <position position="21"/>
    </location>
</feature>
<feature type="modified residue" description="N6-(2-hydroxyisobutyryl)lysine; alternate" evidence="22">
    <location>
        <position position="24"/>
    </location>
</feature>
<feature type="modified residue" description="N6-acetyllysine; alternate" evidence="2">
    <location>
        <position position="24"/>
    </location>
</feature>
<feature type="modified residue" description="N6-crotonyllysine; alternate" evidence="20">
    <location>
        <position position="24"/>
    </location>
</feature>
<feature type="modified residue" description="N6-lactoyllysine; alternate" evidence="27">
    <location>
        <position position="24"/>
    </location>
</feature>
<feature type="modified residue" description="N6-(2-hydroxyisobutyryl)lysine" evidence="22">
    <location>
        <position position="25"/>
    </location>
</feature>
<feature type="modified residue" description="N6-(2-hydroxyisobutyryl)lysine; alternate" evidence="22">
    <location>
        <position position="35"/>
    </location>
</feature>
<feature type="modified residue" description="N6-(beta-hydroxybutyryl)lysine; alternate" evidence="24">
    <location>
        <position position="35"/>
    </location>
</feature>
<feature type="modified residue" description="N6-crotonyllysine; alternate" evidence="20">
    <location>
        <position position="35"/>
    </location>
</feature>
<feature type="modified residue" description="N6-glutaryllysine; alternate" evidence="26">
    <location>
        <position position="35"/>
    </location>
</feature>
<feature type="modified residue" description="N6-succinyllysine; alternate" evidence="21">
    <location>
        <position position="35"/>
    </location>
</feature>
<feature type="modified residue" description="PolyADP-ribosyl glutamic acid" evidence="7">
    <location>
        <position position="36"/>
    </location>
</feature>
<feature type="modified residue" description="Phosphoserine; by AMPK" evidence="7">
    <location>
        <position position="37"/>
    </location>
</feature>
<feature type="modified residue" description="N6-(2-hydroxyisobutyryl)lysine; alternate" evidence="22">
    <location>
        <position position="44"/>
    </location>
</feature>
<feature type="modified residue" description="N6-glutaryllysine; alternate" evidence="26">
    <location>
        <position position="44"/>
    </location>
</feature>
<feature type="modified residue" description="N6-lactoyllysine; alternate" evidence="27">
    <location>
        <position position="44"/>
    </location>
</feature>
<feature type="modified residue" description="N6-(2-hydroxyisobutyryl)lysine; alternate" evidence="22">
    <location>
        <position position="47"/>
    </location>
</feature>
<feature type="modified residue" description="N6-glutaryllysine; alternate" evidence="26">
    <location>
        <position position="47"/>
    </location>
</feature>
<feature type="modified residue" description="N6-methyllysine; alternate" evidence="17">
    <location>
        <position position="47"/>
    </location>
</feature>
<feature type="modified residue" description="N6,N6-dimethyllysine; alternate" evidence="17">
    <location>
        <position position="58"/>
    </location>
</feature>
<feature type="modified residue" description="N6-(2-hydroxyisobutyryl)lysine; alternate" evidence="22">
    <location>
        <position position="58"/>
    </location>
</feature>
<feature type="modified residue" description="Dimethylated arginine" evidence="9">
    <location>
        <position position="80"/>
    </location>
</feature>
<feature type="modified residue" description="N6,N6,N6-trimethyllysine; alternate" evidence="9">
    <location>
        <position position="86"/>
    </location>
</feature>
<feature type="modified residue" description="N6-(2-hydroxyisobutyryl)lysine; alternate" evidence="22">
    <location>
        <position position="86"/>
    </location>
</feature>
<feature type="modified residue" description="N6-(beta-hydroxybutyryl)lysine; alternate" evidence="24">
    <location>
        <position position="86"/>
    </location>
</feature>
<feature type="modified residue" description="N6-acetyllysine; alternate" evidence="9">
    <location>
        <position position="86"/>
    </location>
</feature>
<feature type="modified residue" description="N6-lactoyllysine; alternate" evidence="27">
    <location>
        <position position="86"/>
    </location>
</feature>
<feature type="modified residue" description="Omega-N-methylarginine" evidence="9">
    <location>
        <position position="87"/>
    </location>
</feature>
<feature type="modified residue" description="Omega-N-methylarginine" evidence="9">
    <location>
        <position position="93"/>
    </location>
</feature>
<feature type="modified residue" description="N6-(2-hydroxyisobutyryl)lysine; alternate" evidence="22">
    <location>
        <position position="109"/>
    </location>
</feature>
<feature type="modified residue" description="N6-glutaryllysine; alternate" evidence="26">
    <location>
        <position position="109"/>
    </location>
</feature>
<feature type="modified residue" description="N6-lactoyllysine; alternate" evidence="27">
    <location>
        <position position="109"/>
    </location>
</feature>
<feature type="modified residue" description="N6-methyllysine; alternate" evidence="17">
    <location>
        <position position="109"/>
    </location>
</feature>
<feature type="modified residue" description="Phosphothreonine" evidence="5">
    <location>
        <position position="116"/>
    </location>
</feature>
<feature type="modified residue" description="N6-(2-hydroxyisobutyryl)lysine; alternate" evidence="22">
    <location>
        <position position="117"/>
    </location>
</feature>
<feature type="modified residue" description="N6-(beta-hydroxybutyryl)lysine; alternate" evidence="24">
    <location>
        <position position="117"/>
    </location>
</feature>
<feature type="modified residue" description="N6-glutaryllysine; alternate" evidence="26">
    <location>
        <position position="117"/>
    </location>
</feature>
<feature type="modified residue" description="N6-lactoyllysine; alternate" evidence="27">
    <location>
        <position position="117"/>
    </location>
</feature>
<feature type="modified residue" description="N6-malonyllysine; alternate" evidence="21">
    <location>
        <position position="117"/>
    </location>
</feature>
<feature type="modified residue" description="N6-methylated lysine; alternate" evidence="5">
    <location>
        <position position="117"/>
    </location>
</feature>
<feature type="modified residue" description="N6-succinyllysine; alternate" evidence="21">
    <location>
        <position position="117"/>
    </location>
</feature>
<feature type="modified residue" description="N6-(2-hydroxyisobutyryl)lysine; alternate" evidence="22">
    <location>
        <position position="121"/>
    </location>
</feature>
<feature type="modified residue" description="N6-(beta-hydroxybutyryl)lysine; alternate" evidence="24">
    <location>
        <position position="121"/>
    </location>
</feature>
<feature type="modified residue" description="N6-glutaryllysine; alternate" evidence="26">
    <location>
        <position position="121"/>
    </location>
</feature>
<feature type="modified residue" description="N6-lactoyllysine; alternate" evidence="27">
    <location>
        <position position="121"/>
    </location>
</feature>
<feature type="modified residue" description="N6-succinyllysine; alternate" evidence="21">
    <location>
        <position position="121"/>
    </location>
</feature>
<feature type="glycosylation site" description="O-linked (GlcNAc) serine" evidence="4">
    <location>
        <position position="113"/>
    </location>
</feature>
<feature type="cross-link" description="Glycyl lysine isopeptide (Lys-Gly) (interchain with G-Cter in SUMO2); alternate" evidence="3">
    <location>
        <position position="6"/>
    </location>
</feature>
<feature type="cross-link" description="Glycyl lysine isopeptide (Lys-Gly) (interchain with G-Cter in SUMO2); alternate" evidence="6">
    <location>
        <position position="21"/>
    </location>
</feature>
<feature type="cross-link" description="Glycyl lysine isopeptide (Lys-Gly) (interchain with G-Cter in ubiquitin); alternate" evidence="19">
    <location>
        <position position="35"/>
    </location>
</feature>
<feature type="cross-link" description="Glycyl lysine isopeptide (Lys-Gly) (interchain with G-Cter in ubiquitin); alternate" evidence="16 17 18">
    <location>
        <position position="121"/>
    </location>
</feature>
<comment type="function">
    <text>Core component of nucleosome. Nucleosomes wrap and compact DNA into chromatin, limiting DNA accessibility to the cellular machineries which require DNA as a template. Histones thereby play a central role in transcription regulation, DNA repair, DNA replication and chromosomal stability. DNA accessibility is regulated via a complex set of post-translational modifications of histones, also called histone code, and nucleosome remodeling.</text>
</comment>
<comment type="function">
    <text>Has broad antibacterial activity. May contribute to the formation of the functional antimicrobial barrier of the colonic epithelium, and to the bactericidal activity of amniotic fluid.</text>
</comment>
<comment type="subunit">
    <text>The nucleosome is a histone octamer containing two molecules each of H2A, H2B, H3 and H4 assembled in one H3-H4 heterotetramer and two H2A-H2B heterodimers. The octamer wraps approximately 147 bp of DNA.</text>
</comment>
<comment type="subcellular location">
    <subcellularLocation>
        <location>Nucleus</location>
    </subcellularLocation>
    <subcellularLocation>
        <location>Chromosome</location>
    </subcellularLocation>
</comment>
<comment type="PTM">
    <text evidence="17">Monoubiquitination at Lys-35 (H2BK34Ub) by the MSL1/MSL2 dimer is required for histone H3 'Lys-4' (H3K4me) and 'Lys-79' (H3K79me) methylation and transcription activation at specific gene loci, such as HOXA9 and MEIS1 loci. Similarly, monoubiquitination at Lys-121 (H2BK120Ub) by the RNF20/40 complex gives a specific tag for epigenetic transcriptional activation and is also prerequisite for histone H3 'Lys-4' and 'Lys-79' methylation. It also functions cooperatively with the FACT dimer to stimulate elongation by RNA polymerase II. H2BK120Ub also acts as a regulator of mRNA splicing: deubiquitination by USP49 is required for efficient cotranscriptional splicing of a large set of exons.</text>
</comment>
<comment type="PTM">
    <text evidence="7 12">Phosphorylation at Ser-37 (H2BS36ph) by AMPK in response to stress promotes transcription (By similarity). Phosphorylated on Ser-15 (H2BS14ph) by STK4/MST1 during apoptosis; which facilitates apoptotic chromatin condensation (PubMed:12757711). Also phosphorylated on Ser-15 in response to DNA double strand breaks (DSBs), and in correlation with somatic hypermutation and immunoglobulin class-switch recombination.</text>
</comment>
<comment type="PTM">
    <text evidence="4">GlcNAcylation at Ser-113 promotes monoubiquitination of Lys-121. It fluctuates in response to extracellular glucose, and associates with transcribed genes (By similarity).</text>
</comment>
<comment type="PTM">
    <text evidence="8 25 28">ADP-ribosylated by PARP1 or PARP2 on Ser-7 (H2BS6ADPr) in response to DNA damage (PubMed:34874266). H2BS6ADPr promotes recruitment of CHD1L (PubMed:34874266). Mono-ADP-ribosylated on Glu-3 (H2BE2ADPr) by PARP3 in response to single-strand breaks (PubMed:27530147). Poly ADP-ribosylation on Glu-36 (H2BE35ADPr) by PARP1 regulates adipogenesis: it inhibits phosphorylation at Ser-37 (H2BS36ph), thereby blocking expression of pro-adipogenetic genes (By similarity).</text>
</comment>
<comment type="PTM">
    <text evidence="20">Crotonylation (Kcr) is specifically present in male germ cells and marks testis-specific genes in post-meiotic cells, including X-linked genes that escape sex chromosome inactivation in haploid cells. Crotonylation marks active promoters and enhancers and confers resistance to transcriptional repressors. It is also associated with post-meiotically activated genes on autosomes.</text>
</comment>
<comment type="PTM">
    <text evidence="27">Lactylated in macrophages by EP300/P300 by using lactoyl-CoA directly derived from endogenous or exogenous lactate, leading to stimulates gene transcription.</text>
</comment>
<comment type="similarity">
    <text evidence="30">Belongs to the histone H2B family.</text>
</comment>
<name>H2BFS_HUMAN</name>
<proteinExistence type="evidence at protein level"/>
<gene>
    <name evidence="31" type="primary">H2BC12L</name>
    <name evidence="31" type="synonym">H2BFS</name>
    <name evidence="31" type="synonym">H2BS1</name>
</gene>
<reference key="1">
    <citation type="submission" date="2000-04" db="EMBL/GenBank/DDBJ databases">
        <title>Genomic structure of putative H2B histone family protein gene.</title>
        <authorList>
            <person name="Shimizu N."/>
            <person name="Kudoh J."/>
            <person name="Shibuya K."/>
        </authorList>
    </citation>
    <scope>NUCLEOTIDE SEQUENCE [GENOMIC DNA]</scope>
</reference>
<reference key="2">
    <citation type="journal article" date="2000" name="Nature">
        <title>The DNA sequence of human chromosome 21.</title>
        <authorList>
            <person name="Hattori M."/>
            <person name="Fujiyama A."/>
            <person name="Taylor T.D."/>
            <person name="Watanabe H."/>
            <person name="Yada T."/>
            <person name="Park H.-S."/>
            <person name="Toyoda A."/>
            <person name="Ishii K."/>
            <person name="Totoki Y."/>
            <person name="Choi D.-K."/>
            <person name="Groner Y."/>
            <person name="Soeda E."/>
            <person name="Ohki M."/>
            <person name="Takagi T."/>
            <person name="Sakaki Y."/>
            <person name="Taudien S."/>
            <person name="Blechschmidt K."/>
            <person name="Polley A."/>
            <person name="Menzel U."/>
            <person name="Delabar J."/>
            <person name="Kumpf K."/>
            <person name="Lehmann R."/>
            <person name="Patterson D."/>
            <person name="Reichwald K."/>
            <person name="Rump A."/>
            <person name="Schillhabel M."/>
            <person name="Schudy A."/>
            <person name="Zimmermann W."/>
            <person name="Rosenthal A."/>
            <person name="Kudoh J."/>
            <person name="Shibuya K."/>
            <person name="Kawasaki K."/>
            <person name="Asakawa S."/>
            <person name="Shintani A."/>
            <person name="Sasaki T."/>
            <person name="Nagamine K."/>
            <person name="Mitsuyama S."/>
            <person name="Antonarakis S.E."/>
            <person name="Minoshima S."/>
            <person name="Shimizu N."/>
            <person name="Nordsiek G."/>
            <person name="Hornischer K."/>
            <person name="Brandt P."/>
            <person name="Scharfe M."/>
            <person name="Schoen O."/>
            <person name="Desario A."/>
            <person name="Reichelt J."/>
            <person name="Kauer G."/>
            <person name="Bloecker H."/>
            <person name="Ramser J."/>
            <person name="Beck A."/>
            <person name="Klages S."/>
            <person name="Hennig S."/>
            <person name="Riesselmann L."/>
            <person name="Dagand E."/>
            <person name="Wehrmeyer S."/>
            <person name="Borzym K."/>
            <person name="Gardiner K."/>
            <person name="Nizetic D."/>
            <person name="Francis F."/>
            <person name="Lehrach H."/>
            <person name="Reinhardt R."/>
            <person name="Yaspo M.-L."/>
        </authorList>
    </citation>
    <scope>NUCLEOTIDE SEQUENCE [LARGE SCALE GENOMIC DNA]</scope>
</reference>
<reference key="3">
    <citation type="journal article" date="2002" name="J. Immunol.">
        <title>Endotoxin-neutralizing antimicrobial proteins of the human placenta.</title>
        <authorList>
            <person name="Kim H.S."/>
            <person name="Cho J.H."/>
            <person name="Park H.W."/>
            <person name="Yoon H."/>
            <person name="Kim M.S."/>
            <person name="Kim S.C."/>
        </authorList>
    </citation>
    <scope>PROTEIN SEQUENCE OF 2-21</scope>
    <scope>FUNCTION</scope>
</reference>
<reference key="4">
    <citation type="journal article" date="1996" name="Eur. J. Biochem.">
        <title>Biochemical and antibacterial analysis of human wound and blister fluid.</title>
        <authorList>
            <person name="Frohm M."/>
            <person name="Gunne H."/>
            <person name="Bergman A.-C."/>
            <person name="Agerberth B."/>
            <person name="Bergman T."/>
            <person name="Boman A."/>
            <person name="Liden S."/>
            <person name="Joernvall H."/>
            <person name="Boman H.G."/>
        </authorList>
    </citation>
    <scope>PROTEIN SEQUENCE OF 2-13</scope>
</reference>
<reference key="5">
    <citation type="journal article" date="2003" name="Peptides">
        <title>Antimicrobial peptides in the first line defence of human colon mucosa.</title>
        <authorList>
            <person name="Tollin M."/>
            <person name="Bergman P."/>
            <person name="Svenberg T."/>
            <person name="Joernvall H."/>
            <person name="Gudmundsson G.H."/>
            <person name="Agerberth B."/>
        </authorList>
    </citation>
    <scope>PROTEIN SEQUENCE OF 2-13</scope>
    <scope>FUNCTION</scope>
</reference>
<reference key="6">
    <citation type="journal article" date="2003" name="Peptides">
        <title>Antimicrobial polypeptides of the human colonic epithelium.</title>
        <authorList>
            <person name="Howell S.J."/>
            <person name="Wilk D."/>
            <person name="Yadav S.P."/>
            <person name="Bevins C.L."/>
        </authorList>
    </citation>
    <scope>PROTEIN SEQUENCE OF 2-13</scope>
    <scope>FUNCTION</scope>
</reference>
<reference key="7">
    <citation type="journal article" date="2006" name="Mol. Cell. Proteomics">
        <title>Quantitative proteomic analysis of post-translational modifications of human histones.</title>
        <authorList>
            <person name="Beck H.C."/>
            <person name="Nielsen E.C."/>
            <person name="Matthiesen R."/>
            <person name="Jensen L.H."/>
            <person name="Sehested M."/>
            <person name="Finn P."/>
            <person name="Grauslund M."/>
            <person name="Hansen A.M."/>
            <person name="Jensen O.N."/>
        </authorList>
    </citation>
    <scope>PROTEIN SEQUENCE OF 7-24</scope>
    <scope>ACETYLATION AT LYS-6; LYS-12; LYS-13; LYS-16; LYS-17 AND LYS-21</scope>
    <scope>METHYLATION AT LYS-47; LYS-58 AND LYS-109</scope>
    <scope>UBIQUITINATION AT LYS-121</scope>
    <scope>IDENTIFICATION BY MASS SPECTROMETRY</scope>
</reference>
<reference key="8">
    <citation type="journal article" date="2003" name="Cell">
        <title>Apoptotic phosphorylation of histone H2B is mediated by mammalian sterile twenty kinase.</title>
        <authorList>
            <person name="Cheung W.L."/>
            <person name="Ajiro K."/>
            <person name="Samejima K."/>
            <person name="Kloc M."/>
            <person name="Cheung P."/>
            <person name="Mizzen C.A."/>
            <person name="Beeser A."/>
            <person name="Etkin L.D."/>
            <person name="Chernoff J."/>
            <person name="Earnshaw W.C."/>
            <person name="Allis C.D."/>
        </authorList>
    </citation>
    <scope>PHOSPHORYLATION AT SER-15</scope>
</reference>
<reference key="9">
    <citation type="journal article" date="2005" name="Mol. Cell">
        <title>Monoubiquitination of human histone H2B: the factors involved and their roles in HOX gene regulation.</title>
        <authorList>
            <person name="Zhu B."/>
            <person name="Zheng Y."/>
            <person name="Pham A.-D."/>
            <person name="Mandal S.S."/>
            <person name="Erdjument-Bromage H."/>
            <person name="Tempst P."/>
            <person name="Reinberg D."/>
        </authorList>
    </citation>
    <scope>UBIQUITINATION AT LYS-121</scope>
</reference>
<reference key="10">
    <citation type="journal article" date="2005" name="Mol. Cell. Biochem.">
        <title>Inhibition of core histones acetylation by carcinogenic nickel(II).</title>
        <authorList>
            <person name="Golebiowski F."/>
            <person name="Kasprzak K.S."/>
        </authorList>
    </citation>
    <scope>ACETYLATION AT LYS-6; LYS-13; LYS-16 AND LYS-21</scope>
</reference>
<reference key="11">
    <citation type="journal article" date="2006" name="Cell">
        <title>Histone H2B monoubiquitination functions cooperatively with FACT to regulate elongation by RNA polymerase II.</title>
        <authorList>
            <person name="Pavri R."/>
            <person name="Zhu B."/>
            <person name="Li G."/>
            <person name="Trojer P."/>
            <person name="Mandal S."/>
            <person name="Shilatifard A."/>
            <person name="Reinberg D."/>
        </authorList>
    </citation>
    <scope>UBIQUITINATION AT LYS-121</scope>
</reference>
<reference key="12">
    <citation type="journal article" date="2011" name="Cell">
        <title>Identification of 67 histone marks and histone lysine crotonylation as a new type of histone modification.</title>
        <authorList>
            <person name="Tan M."/>
            <person name="Luo H."/>
            <person name="Lee S."/>
            <person name="Jin F."/>
            <person name="Yang J.S."/>
            <person name="Montellier E."/>
            <person name="Buchou T."/>
            <person name="Cheng Z."/>
            <person name="Rousseaux S."/>
            <person name="Rajagopal N."/>
            <person name="Lu Z."/>
            <person name="Ye Z."/>
            <person name="Zhu Q."/>
            <person name="Wysocka J."/>
            <person name="Ye Y."/>
            <person name="Khochbin S."/>
            <person name="Ren B."/>
            <person name="Zhao Y."/>
        </authorList>
    </citation>
    <scope>CROTONYLATION AT LYS-6; LYS-12; LYS-13; LYS-16; LYS-17; LYS-21; LYS-24 AND LYS-35</scope>
</reference>
<reference key="13">
    <citation type="journal article" date="2011" name="Mol. Cell">
        <title>The RING finger protein MSL2 in the MOF complex is an E3 ubiquitin ligase for H2B K34 and is involved in crosstalk with H3 K4 and K79 methylation.</title>
        <authorList>
            <person name="Wu L."/>
            <person name="Zee B.M."/>
            <person name="Wang Y."/>
            <person name="Garcia B.A."/>
            <person name="Dou Y."/>
        </authorList>
    </citation>
    <scope>UBIQUITINATION AT LYS-35</scope>
</reference>
<reference key="14">
    <citation type="journal article" date="2012" name="Mol. Cell. Proteomics">
        <title>Lysine succinylation and lysine malonylation in histones.</title>
        <authorList>
            <person name="Xie Z."/>
            <person name="Dai J."/>
            <person name="Dai L."/>
            <person name="Tan M."/>
            <person name="Cheng Z."/>
            <person name="Wu Y."/>
            <person name="Boeke J.D."/>
            <person name="Zhao Y."/>
        </authorList>
    </citation>
    <scope>SUCCINYLATION AT LYS-35; LYS-117 AND LYS-121</scope>
    <scope>MALONYLATION AT LYS-117</scope>
</reference>
<reference key="15">
    <citation type="journal article" date="2013" name="Genes Dev.">
        <title>USP49 deubiquitinates histone H2B and regulates cotranscriptional pre-mRNA splicing.</title>
        <authorList>
            <person name="Zhang Z."/>
            <person name="Jones A."/>
            <person name="Joo H.Y."/>
            <person name="Zhou D."/>
            <person name="Cao Y."/>
            <person name="Chen S."/>
            <person name="Erdjument-Bromage H."/>
            <person name="Renfrow M."/>
            <person name="He H."/>
            <person name="Tempst P."/>
            <person name="Townes T.M."/>
            <person name="Giles K.E."/>
            <person name="Ma L."/>
            <person name="Wang H."/>
        </authorList>
    </citation>
    <scope>UBIQUITINATION</scope>
    <scope>DEUBIQUITINATION BY USP49</scope>
</reference>
<reference key="16">
    <citation type="journal article" date="2014" name="Nat. Chem. Biol.">
        <title>Lysine 2-hydroxyisobutyrylation is a widely distributed active histone mark.</title>
        <authorList>
            <person name="Dai L."/>
            <person name="Peng C."/>
            <person name="Montellier E."/>
            <person name="Lu Z."/>
            <person name="Chen Y."/>
            <person name="Ishii H."/>
            <person name="Debernardi A."/>
            <person name="Buchou T."/>
            <person name="Rousseaux S."/>
            <person name="Jin F."/>
            <person name="Sabari B.R."/>
            <person name="Deng Z."/>
            <person name="Allis C.D."/>
            <person name="Ren B."/>
            <person name="Khochbin S."/>
            <person name="Zhao Y."/>
        </authorList>
    </citation>
    <scope>HYDROXYBUTYRYLATION AT LYS-6; LYS-13; LYS-21; LYS-24; LYS-25; LYS-35; LYS-44; LYS-47; LYS-58; LYS-86; LYS-109; LYS-117 AND LYS-121</scope>
</reference>
<reference key="17">
    <citation type="journal article" date="2016" name="Mol. Cell">
        <title>Dynamic competing histone H4 K5K8 acetylation and butyrylation are hallmarks of highly active gene promoters.</title>
        <authorList>
            <person name="Goudarzi A."/>
            <person name="Zhang D."/>
            <person name="Huang H."/>
            <person name="Barral S."/>
            <person name="Kwon O.K."/>
            <person name="Qi S."/>
            <person name="Tang Z."/>
            <person name="Buchou T."/>
            <person name="Vitte A.L."/>
            <person name="He T."/>
            <person name="Cheng Z."/>
            <person name="Montellier E."/>
            <person name="Gaucher J."/>
            <person name="Curtet S."/>
            <person name="Debernardi A."/>
            <person name="Charbonnier G."/>
            <person name="Puthier D."/>
            <person name="Petosa C."/>
            <person name="Panne D."/>
            <person name="Rousseaux S."/>
            <person name="Roeder R.G."/>
            <person name="Zhao Y."/>
            <person name="Khochbin S."/>
        </authorList>
    </citation>
    <scope>BUTYRYLATION AT LYS-6 AND LYS-21</scope>
</reference>
<reference key="18">
    <citation type="journal article" date="2016" name="Mol. Cell">
        <title>Metabolic regulation of gene expression by histone lysine beta-hydroxybutyrylation.</title>
        <authorList>
            <person name="Xie Z."/>
            <person name="Zhang D."/>
            <person name="Chung D."/>
            <person name="Tang Z."/>
            <person name="Huang H."/>
            <person name="Dai L."/>
            <person name="Qi S."/>
            <person name="Li J."/>
            <person name="Colak G."/>
            <person name="Chen Y."/>
            <person name="Xia C."/>
            <person name="Peng C."/>
            <person name="Ruan H."/>
            <person name="Kirkey M."/>
            <person name="Wang D."/>
            <person name="Jensen L.M."/>
            <person name="Kwon O.K."/>
            <person name="Lee S."/>
            <person name="Pletcher S.D."/>
            <person name="Tan M."/>
            <person name="Lombard D.B."/>
            <person name="White K.P."/>
            <person name="Zhao H."/>
            <person name="Li J."/>
            <person name="Roeder R.G."/>
            <person name="Yang X."/>
            <person name="Zhao Y."/>
        </authorList>
    </citation>
    <scope>HYDROXYBUTYRYLATION AT LYS-6; LYS-12; LYS-17; LYS-21; LYS-35; LYS-86; LYS-117 AND LYS-121</scope>
</reference>
<reference key="19">
    <citation type="journal article" date="2016" name="Nat. Commun.">
        <title>PARP3 is a sensor of nicked nucleosomes and monoribosylates histone H2B(Glu2).</title>
        <authorList>
            <person name="Grundy G.J."/>
            <person name="Polo L.M."/>
            <person name="Zeng Z."/>
            <person name="Rulten S.L."/>
            <person name="Hoch N.C."/>
            <person name="Paomephan P."/>
            <person name="Xu Y."/>
            <person name="Sweet S.M."/>
            <person name="Thorne A.W."/>
            <person name="Oliver A.W."/>
            <person name="Matthews S.J."/>
            <person name="Pearl L.H."/>
            <person name="Caldecott K.W."/>
        </authorList>
    </citation>
    <scope>ADP-RIBOSYLATION AT GLU-3</scope>
</reference>
<reference key="20">
    <citation type="journal article" date="2019" name="Mol. Cell">
        <title>Glutarylation of histone H4 lysine 91 regulates chromatin dynamics.</title>
        <authorList>
            <person name="Bao X."/>
            <person name="Liu Z."/>
            <person name="Zhang W."/>
            <person name="Gladysz K."/>
            <person name="Fung Y.M.E."/>
            <person name="Tian G."/>
            <person name="Xiong Y."/>
            <person name="Wong J.W.H."/>
            <person name="Yuen K.W.Y."/>
            <person name="Li X.D."/>
        </authorList>
    </citation>
    <scope>GLUTARYLATION AT LYS-17; LYS-35; LYS-44; LYS-47; LYS-109; LYS-117 AND LYS-121</scope>
</reference>
<reference key="21">
    <citation type="journal article" date="2019" name="Nature">
        <title>Metabolic regulation of gene expression by histone lactylation.</title>
        <authorList>
            <person name="Zhang D."/>
            <person name="Tang Z."/>
            <person name="Huang H."/>
            <person name="Zhou G."/>
            <person name="Cui C."/>
            <person name="Weng Y."/>
            <person name="Liu W."/>
            <person name="Kim S."/>
            <person name="Lee S."/>
            <person name="Perez-Neut M."/>
            <person name="Ding J."/>
            <person name="Czyz D."/>
            <person name="Hu R."/>
            <person name="Ye Z."/>
            <person name="He M."/>
            <person name="Zheng Y.G."/>
            <person name="Shuman H.A."/>
            <person name="Dai L."/>
            <person name="Ren B."/>
            <person name="Roeder R.G."/>
            <person name="Becker L."/>
            <person name="Zhao Y."/>
        </authorList>
    </citation>
    <scope>LACTYLATION AT LYS-6; LYS-12; LYS-16; LYS-17; LYS-21; LYS-24; LYS-44; LYS-86; LYS-109; LYS-117 AND LYS-121</scope>
</reference>
<reference key="22">
    <citation type="journal article" date="2021" name="Elife">
        <title>Serine ADP-ribosylation marks nucleosomes for ALC1-dependent chromatin remodeling.</title>
        <authorList>
            <person name="Mohapatra J."/>
            <person name="Tashiro K."/>
            <person name="Beckner R.L."/>
            <person name="Sierra J."/>
            <person name="Kilgore J.A."/>
            <person name="Williams N.S."/>
            <person name="Liszczak G."/>
        </authorList>
    </citation>
    <scope>ADP-RIBOSYLATION AT SER-7</scope>
</reference>
<accession>P57053</accession>
<accession>A0AVF9</accession>
<accession>Q5R2W0</accession>
<keyword id="KW-0007">Acetylation</keyword>
<keyword id="KW-0013">ADP-ribosylation</keyword>
<keyword id="KW-0044">Antibiotic</keyword>
<keyword id="KW-0929">Antimicrobial</keyword>
<keyword id="KW-0158">Chromosome</keyword>
<keyword id="KW-0903">Direct protein sequencing</keyword>
<keyword id="KW-0238">DNA-binding</keyword>
<keyword id="KW-0325">Glycoprotein</keyword>
<keyword id="KW-0379">Hydroxylation</keyword>
<keyword id="KW-1017">Isopeptide bond</keyword>
<keyword id="KW-0488">Methylation</keyword>
<keyword id="KW-0544">Nucleosome core</keyword>
<keyword id="KW-0539">Nucleus</keyword>
<keyword id="KW-0597">Phosphoprotein</keyword>
<keyword id="KW-1267">Proteomics identification</keyword>
<keyword id="KW-1185">Reference proteome</keyword>
<keyword id="KW-0832">Ubl conjugation</keyword>
<sequence length="126" mass="13944">MPEPAKSAPAPKKGSKKAVTKAQKKDGRKRKRSRKESYSVYVYKVLKQVHPDTGISSKAMGIMNSFVNDIFERIAGEASRLPHYNKRSTITSREIQTAVRLLLPGELAKHAVSEGTKAVTKYTSAK</sequence>
<protein>
    <recommendedName>
        <fullName evidence="30">Histone H2B type F-S</fullName>
    </recommendedName>
    <alternativeName>
        <fullName evidence="31">H2B-clustered histone 12 like</fullName>
    </alternativeName>
    <alternativeName>
        <fullName evidence="31">H2B.S histone 1</fullName>
    </alternativeName>
    <alternativeName>
        <fullName>Histone H2B.s</fullName>
        <shortName>H2B/s</shortName>
    </alternativeName>
</protein>